<keyword id="KW-1003">Cell membrane</keyword>
<keyword id="KW-0449">Lipoprotein</keyword>
<keyword id="KW-0464">Manganese</keyword>
<keyword id="KW-0472">Membrane</keyword>
<keyword id="KW-0479">Metal-binding</keyword>
<keyword id="KW-0564">Palmitate</keyword>
<keyword id="KW-0614">Plasmid</keyword>
<keyword id="KW-0732">Signal</keyword>
<keyword id="KW-0813">Transport</keyword>
<protein>
    <recommendedName>
        <fullName evidence="3">Metal ABC transporter substrate-binding lipoprotein ScbA</fullName>
    </recommendedName>
</protein>
<geneLocation type="plasmid">
    <name>pSCBA002</name>
</geneLocation>
<dbReference type="EMBL" id="U46542">
    <property type="protein sequence ID" value="AAC44133.1"/>
    <property type="molecule type" value="Genomic_DNA"/>
</dbReference>
<dbReference type="SMR" id="Q53891"/>
<dbReference type="STRING" id="45634.SCRDD08_00258"/>
<dbReference type="GO" id="GO:0005886">
    <property type="term" value="C:plasma membrane"/>
    <property type="evidence" value="ECO:0007669"/>
    <property type="project" value="UniProtKB-SubCell"/>
</dbReference>
<dbReference type="GO" id="GO:0046872">
    <property type="term" value="F:metal ion binding"/>
    <property type="evidence" value="ECO:0007669"/>
    <property type="project" value="UniProtKB-KW"/>
</dbReference>
<dbReference type="GO" id="GO:0007155">
    <property type="term" value="P:cell adhesion"/>
    <property type="evidence" value="ECO:0007669"/>
    <property type="project" value="InterPro"/>
</dbReference>
<dbReference type="GO" id="GO:0030001">
    <property type="term" value="P:metal ion transport"/>
    <property type="evidence" value="ECO:0007669"/>
    <property type="project" value="InterPro"/>
</dbReference>
<dbReference type="CDD" id="cd01137">
    <property type="entry name" value="PsaA"/>
    <property type="match status" value="1"/>
</dbReference>
<dbReference type="Gene3D" id="3.40.50.1980">
    <property type="entry name" value="Nitrogenase molybdenum iron protein domain"/>
    <property type="match status" value="2"/>
</dbReference>
<dbReference type="InterPro" id="IPR006129">
    <property type="entry name" value="AdhesinB"/>
</dbReference>
<dbReference type="InterPro" id="IPR050492">
    <property type="entry name" value="Bact_metal-bind_prot9"/>
</dbReference>
<dbReference type="InterPro" id="IPR006128">
    <property type="entry name" value="Lipoprotein_PsaA-like"/>
</dbReference>
<dbReference type="InterPro" id="IPR006127">
    <property type="entry name" value="ZnuA-like"/>
</dbReference>
<dbReference type="NCBIfam" id="NF040928">
    <property type="entry name" value="ABC_lipo_SloC"/>
    <property type="match status" value="1"/>
</dbReference>
<dbReference type="PANTHER" id="PTHR42953">
    <property type="entry name" value="HIGH-AFFINITY ZINC UPTAKE SYSTEM PROTEIN ZNUA-RELATED"/>
    <property type="match status" value="1"/>
</dbReference>
<dbReference type="PANTHER" id="PTHR42953:SF1">
    <property type="entry name" value="METAL-BINDING PROTEIN HI_0362-RELATED"/>
    <property type="match status" value="1"/>
</dbReference>
<dbReference type="Pfam" id="PF01297">
    <property type="entry name" value="ZnuA"/>
    <property type="match status" value="1"/>
</dbReference>
<dbReference type="PRINTS" id="PR00691">
    <property type="entry name" value="ADHESINB"/>
</dbReference>
<dbReference type="PRINTS" id="PR00690">
    <property type="entry name" value="ADHESNFAMILY"/>
</dbReference>
<dbReference type="SUPFAM" id="SSF53807">
    <property type="entry name" value="Helical backbone' metal receptor"/>
    <property type="match status" value="1"/>
</dbReference>
<dbReference type="PROSITE" id="PS51257">
    <property type="entry name" value="PROKAR_LIPOPROTEIN"/>
    <property type="match status" value="1"/>
</dbReference>
<comment type="function">
    <text evidence="1 4">Part of an ATP-binding cassette (ABC) transport system involved in metal import (By similarity). Binds a metal with high affinity and specificity and delivers it to the membrane permease for translocation into the cytoplasm (By similarity). Part of an ATP-driven transport system for manganese. Does not exhibit adhesion properties (Probable).</text>
</comment>
<comment type="subcellular location">
    <subcellularLocation>
        <location evidence="2">Cell membrane</location>
        <topology evidence="2">Lipid-anchor</topology>
    </subcellularLocation>
</comment>
<comment type="similarity">
    <text evidence="3">Belongs to the bacterial solute-binding protein 9 family.</text>
</comment>
<feature type="signal peptide" evidence="3">
    <location>
        <begin position="1"/>
        <end position="19"/>
    </location>
</feature>
<feature type="chain" id="PRO_0000031885" description="Metal ABC transporter substrate-binding lipoprotein ScbA">
    <location>
        <begin position="20"/>
        <end position="310"/>
    </location>
</feature>
<feature type="binding site" evidence="1">
    <location>
        <position position="68"/>
    </location>
    <ligand>
        <name>a divalent metal cation</name>
        <dbReference type="ChEBI" id="CHEBI:60240"/>
    </ligand>
</feature>
<feature type="binding site" evidence="1">
    <location>
        <position position="140"/>
    </location>
    <ligand>
        <name>a divalent metal cation</name>
        <dbReference type="ChEBI" id="CHEBI:60240"/>
    </ligand>
</feature>
<feature type="binding site" evidence="1">
    <location>
        <position position="206"/>
    </location>
    <ligand>
        <name>a divalent metal cation</name>
        <dbReference type="ChEBI" id="CHEBI:60240"/>
    </ligand>
</feature>
<feature type="binding site" evidence="1">
    <location>
        <position position="281"/>
    </location>
    <ligand>
        <name>a divalent metal cation</name>
        <dbReference type="ChEBI" id="CHEBI:60240"/>
    </ligand>
</feature>
<feature type="lipid moiety-binding region" description="N-palmitoyl cysteine" evidence="2">
    <location>
        <position position="20"/>
    </location>
</feature>
<feature type="lipid moiety-binding region" description="S-diacylglycerol cysteine" evidence="2">
    <location>
        <position position="20"/>
    </location>
</feature>
<reference key="1">
    <citation type="journal article" date="1996" name="Infect. Immun.">
        <title>scbA from Streptococcus crista CC5A: an atypical member of the lraI gene family.</title>
        <authorList>
            <person name="Correia F.F."/>
            <person name="DiRienzo J.M."/>
            <person name="McKay T.L."/>
            <person name="Rosan B."/>
        </authorList>
    </citation>
    <scope>NUCLEOTIDE SEQUENCE [GENOMIC DNA]</scope>
    <source>
        <strain>CC5A</strain>
    </source>
</reference>
<gene>
    <name type="primary">scbA</name>
</gene>
<organism>
    <name type="scientific">Streptococcus cristatus</name>
    <dbReference type="NCBI Taxonomy" id="45634"/>
    <lineage>
        <taxon>Bacteria</taxon>
        <taxon>Bacillati</taxon>
        <taxon>Bacillota</taxon>
        <taxon>Bacilli</taxon>
        <taxon>Lactobacillales</taxon>
        <taxon>Streptococcaceae</taxon>
        <taxon>Streptococcus</taxon>
    </lineage>
</organism>
<name>MTSA_STRCR</name>
<sequence length="310" mass="34725">MKKCRFLVLLLLAFVGLAACSSQKSSTETGSSKLNVVATNSIIADITKNIAGDKINLHSIVPVGQDPHEYEPLPEDVKKTSQADLIFYNGINLETGGNAWFTKLVENAKKKENKDYYAVSEGVDVIYLEGQSEKGKEDPHAWLNLENGIIYAQNIAKRLSEKDPANKETYEKNLKAYVEKLSALDKEAKEKFNNIPGEKKMIVTSEGCFKYFSKAYNVPSAYIWEINTEEEGTPDQIKTLVEKLRKTKVPSLFVESSVDDRPMKTVSKDTNIPIYAKIFTDSVAEKGEEGDSYYSMMKYNLEKIAEGLSK</sequence>
<proteinExistence type="inferred from homology"/>
<accession>Q53891</accession>
<evidence type="ECO:0000250" key="1">
    <source>
        <dbReference type="UniProtKB" id="P0A4G2"/>
    </source>
</evidence>
<evidence type="ECO:0000255" key="2">
    <source>
        <dbReference type="PROSITE-ProRule" id="PRU00303"/>
    </source>
</evidence>
<evidence type="ECO:0000305" key="3"/>
<evidence type="ECO:0000305" key="4">
    <source>
    </source>
</evidence>